<sequence>MTHDYIVKALAFDGEIRAYAALTTETVQEAQTRHYTWPTASAAMGRTMTATAMMGAMLKGDQKLTVTVDGQGPIGRIIADANAKGEVRAYVDHPQTHFPLNEQGKLDVRRAVGTNGSIIVVKDVGMKDYFSGASPIVSGELGEDFTYYYATSEQTPSSVGLGVLVNPDNTIKAAGGFIIQVMPGAKDETISKLEKAISEMTPVSKLIEQGLTPEGLLNEILGEDHVQILEKMPVQFECNCSHEKFLNAIKGLGEAEIQNMIKEDHGAEAVCHFCGNKYKYTEEELNVLLESLA</sequence>
<organism>
    <name type="scientific">Staphylococcus aureus (strain N315)</name>
    <dbReference type="NCBI Taxonomy" id="158879"/>
    <lineage>
        <taxon>Bacteria</taxon>
        <taxon>Bacillati</taxon>
        <taxon>Bacillota</taxon>
        <taxon>Bacilli</taxon>
        <taxon>Bacillales</taxon>
        <taxon>Staphylococcaceae</taxon>
        <taxon>Staphylococcus</taxon>
    </lineage>
</organism>
<proteinExistence type="evidence at protein level"/>
<protein>
    <recommendedName>
        <fullName evidence="1">33 kDa chaperonin</fullName>
    </recommendedName>
    <alternativeName>
        <fullName evidence="1">Heat shock protein 33 homolog</fullName>
        <shortName evidence="1">HSP33</shortName>
    </alternativeName>
</protein>
<reference key="1">
    <citation type="journal article" date="2001" name="Lancet">
        <title>Whole genome sequencing of meticillin-resistant Staphylococcus aureus.</title>
        <authorList>
            <person name="Kuroda M."/>
            <person name="Ohta T."/>
            <person name="Uchiyama I."/>
            <person name="Baba T."/>
            <person name="Yuzawa H."/>
            <person name="Kobayashi I."/>
            <person name="Cui L."/>
            <person name="Oguchi A."/>
            <person name="Aoki K."/>
            <person name="Nagai Y."/>
            <person name="Lian J.-Q."/>
            <person name="Ito T."/>
            <person name="Kanamori M."/>
            <person name="Matsumaru H."/>
            <person name="Maruyama A."/>
            <person name="Murakami H."/>
            <person name="Hosoyama A."/>
            <person name="Mizutani-Ui Y."/>
            <person name="Takahashi N.K."/>
            <person name="Sawano T."/>
            <person name="Inoue R."/>
            <person name="Kaito C."/>
            <person name="Sekimizu K."/>
            <person name="Hirakawa H."/>
            <person name="Kuhara S."/>
            <person name="Goto S."/>
            <person name="Yabuzaki J."/>
            <person name="Kanehisa M."/>
            <person name="Yamashita A."/>
            <person name="Oshima K."/>
            <person name="Furuya K."/>
            <person name="Yoshino C."/>
            <person name="Shiba T."/>
            <person name="Hattori M."/>
            <person name="Ogasawara N."/>
            <person name="Hayashi H."/>
            <person name="Hiramatsu K."/>
        </authorList>
    </citation>
    <scope>NUCLEOTIDE SEQUENCE [LARGE SCALE GENOMIC DNA]</scope>
    <source>
        <strain>N315</strain>
    </source>
</reference>
<reference key="2">
    <citation type="journal article" date="2005" name="J. Microbiol. Methods">
        <title>Correlation of proteomic and transcriptomic profiles of Staphylococcus aureus during the post-exponential phase of growth.</title>
        <authorList>
            <person name="Scherl A."/>
            <person name="Francois P."/>
            <person name="Bento M."/>
            <person name="Deshusses J.M."/>
            <person name="Charbonnier Y."/>
            <person name="Converset V."/>
            <person name="Huyghe A."/>
            <person name="Walter N."/>
            <person name="Hoogland C."/>
            <person name="Appel R.D."/>
            <person name="Sanchez J.-C."/>
            <person name="Zimmermann-Ivol C.G."/>
            <person name="Corthals G.L."/>
            <person name="Hochstrasser D.F."/>
            <person name="Schrenzel J."/>
        </authorList>
    </citation>
    <scope>IDENTIFICATION BY MASS SPECTROMETRY</scope>
    <source>
        <strain>N315</strain>
    </source>
</reference>
<reference key="3">
    <citation type="submission" date="2007-10" db="UniProtKB">
        <title>Shotgun proteomic analysis of total and membrane protein extracts of S. aureus strain N315.</title>
        <authorList>
            <person name="Vaezzadeh A.R."/>
            <person name="Deshusses J."/>
            <person name="Lescuyer P."/>
            <person name="Hochstrasser D.F."/>
        </authorList>
    </citation>
    <scope>IDENTIFICATION BY MASS SPECTROMETRY [LARGE SCALE ANALYSIS]</scope>
    <source>
        <strain>N315</strain>
    </source>
</reference>
<evidence type="ECO:0000255" key="1">
    <source>
        <dbReference type="HAMAP-Rule" id="MF_00117"/>
    </source>
</evidence>
<keyword id="KW-0143">Chaperone</keyword>
<keyword id="KW-0963">Cytoplasm</keyword>
<keyword id="KW-1015">Disulfide bond</keyword>
<keyword id="KW-0676">Redox-active center</keyword>
<keyword id="KW-0862">Zinc</keyword>
<accession>P99082</accession>
<accession>Q99W91</accession>
<comment type="function">
    <text evidence="1">Redox regulated molecular chaperone. Protects both thermally unfolding and oxidatively damaged proteins from irreversible aggregation. Plays an important role in the bacterial defense system toward oxidative stress.</text>
</comment>
<comment type="subcellular location">
    <subcellularLocation>
        <location evidence="1">Cytoplasm</location>
    </subcellularLocation>
</comment>
<comment type="PTM">
    <text evidence="1">Under oxidizing conditions two disulfide bonds are formed involving the reactive cysteines. Under reducing conditions zinc is bound to the reactive cysteines and the protein is inactive.</text>
</comment>
<comment type="similarity">
    <text evidence="1">Belongs to the HSP33 family.</text>
</comment>
<name>HSLO_STAAN</name>
<feature type="chain" id="PRO_0000192201" description="33 kDa chaperonin">
    <location>
        <begin position="1"/>
        <end position="293"/>
    </location>
</feature>
<feature type="disulfide bond" description="Redox-active" evidence="1">
    <location>
        <begin position="238"/>
        <end position="240"/>
    </location>
</feature>
<feature type="disulfide bond" description="Redox-active" evidence="1">
    <location>
        <begin position="271"/>
        <end position="274"/>
    </location>
</feature>
<gene>
    <name evidence="1" type="primary">hslO</name>
    <name type="ordered locus">SA0470</name>
</gene>
<dbReference type="EMBL" id="BA000018">
    <property type="protein sequence ID" value="BAB41700.1"/>
    <property type="molecule type" value="Genomic_DNA"/>
</dbReference>
<dbReference type="PIR" id="A89818">
    <property type="entry name" value="A89818"/>
</dbReference>
<dbReference type="RefSeq" id="WP_000148598.1">
    <property type="nucleotide sequence ID" value="NC_002745.2"/>
</dbReference>
<dbReference type="SMR" id="P99082"/>
<dbReference type="EnsemblBacteria" id="BAB41700">
    <property type="protein sequence ID" value="BAB41700"/>
    <property type="gene ID" value="BAB41700"/>
</dbReference>
<dbReference type="KEGG" id="sau:SA0470"/>
<dbReference type="HOGENOM" id="CLU_054493_1_0_9"/>
<dbReference type="GO" id="GO:0005737">
    <property type="term" value="C:cytoplasm"/>
    <property type="evidence" value="ECO:0007669"/>
    <property type="project" value="UniProtKB-SubCell"/>
</dbReference>
<dbReference type="GO" id="GO:0044183">
    <property type="term" value="F:protein folding chaperone"/>
    <property type="evidence" value="ECO:0007669"/>
    <property type="project" value="TreeGrafter"/>
</dbReference>
<dbReference type="GO" id="GO:0051082">
    <property type="term" value="F:unfolded protein binding"/>
    <property type="evidence" value="ECO:0007669"/>
    <property type="project" value="UniProtKB-UniRule"/>
</dbReference>
<dbReference type="GO" id="GO:0042026">
    <property type="term" value="P:protein refolding"/>
    <property type="evidence" value="ECO:0007669"/>
    <property type="project" value="TreeGrafter"/>
</dbReference>
<dbReference type="CDD" id="cd00498">
    <property type="entry name" value="Hsp33"/>
    <property type="match status" value="1"/>
</dbReference>
<dbReference type="Gene3D" id="3.55.30.10">
    <property type="entry name" value="Hsp33 domain"/>
    <property type="match status" value="1"/>
</dbReference>
<dbReference type="Gene3D" id="3.90.1280.10">
    <property type="entry name" value="HSP33 redox switch-like"/>
    <property type="match status" value="1"/>
</dbReference>
<dbReference type="HAMAP" id="MF_00117">
    <property type="entry name" value="HslO"/>
    <property type="match status" value="1"/>
</dbReference>
<dbReference type="InterPro" id="IPR000397">
    <property type="entry name" value="Heat_shock_Hsp33"/>
</dbReference>
<dbReference type="InterPro" id="IPR016154">
    <property type="entry name" value="Heat_shock_Hsp33_C"/>
</dbReference>
<dbReference type="InterPro" id="IPR016153">
    <property type="entry name" value="Heat_shock_Hsp33_N"/>
</dbReference>
<dbReference type="NCBIfam" id="NF001033">
    <property type="entry name" value="PRK00114.1"/>
    <property type="match status" value="1"/>
</dbReference>
<dbReference type="PANTHER" id="PTHR30111">
    <property type="entry name" value="33 KDA CHAPERONIN"/>
    <property type="match status" value="1"/>
</dbReference>
<dbReference type="PANTHER" id="PTHR30111:SF1">
    <property type="entry name" value="33 KDA CHAPERONIN"/>
    <property type="match status" value="1"/>
</dbReference>
<dbReference type="Pfam" id="PF01430">
    <property type="entry name" value="HSP33"/>
    <property type="match status" value="1"/>
</dbReference>
<dbReference type="PIRSF" id="PIRSF005261">
    <property type="entry name" value="Heat_shock_Hsp33"/>
    <property type="match status" value="1"/>
</dbReference>
<dbReference type="SUPFAM" id="SSF64397">
    <property type="entry name" value="Hsp33 domain"/>
    <property type="match status" value="1"/>
</dbReference>
<dbReference type="SUPFAM" id="SSF118352">
    <property type="entry name" value="HSP33 redox switch-like"/>
    <property type="match status" value="1"/>
</dbReference>